<dbReference type="EMBL" id="AF022186">
    <property type="protein sequence ID" value="AAB82669.1"/>
    <property type="molecule type" value="Genomic_DNA"/>
</dbReference>
<dbReference type="PIR" id="T11988">
    <property type="entry name" value="T11988"/>
</dbReference>
<dbReference type="RefSeq" id="NP_045092.1">
    <property type="nucleotide sequence ID" value="NC_001840.1"/>
</dbReference>
<dbReference type="GeneID" id="800246"/>
<dbReference type="GO" id="GO:0009507">
    <property type="term" value="C:chloroplast"/>
    <property type="evidence" value="ECO:0007669"/>
    <property type="project" value="UniProtKB-SubCell"/>
</dbReference>
<dbReference type="GO" id="GO:0005524">
    <property type="term" value="F:ATP binding"/>
    <property type="evidence" value="ECO:0007669"/>
    <property type="project" value="UniProtKB-KW"/>
</dbReference>
<dbReference type="GO" id="GO:0016887">
    <property type="term" value="F:ATP hydrolysis activity"/>
    <property type="evidence" value="ECO:0007669"/>
    <property type="project" value="InterPro"/>
</dbReference>
<dbReference type="Gene3D" id="3.40.50.300">
    <property type="entry name" value="P-loop containing nucleotide triphosphate hydrolases"/>
    <property type="match status" value="1"/>
</dbReference>
<dbReference type="InterPro" id="IPR003593">
    <property type="entry name" value="AAA+_ATPase"/>
</dbReference>
<dbReference type="InterPro" id="IPR027417">
    <property type="entry name" value="P-loop_NTPase"/>
</dbReference>
<dbReference type="InterPro" id="IPR045735">
    <property type="entry name" value="Spore_III_AA_AAA+_ATPase"/>
</dbReference>
<dbReference type="PANTHER" id="PTHR20953">
    <property type="entry name" value="KINASE-RELATED"/>
    <property type="match status" value="1"/>
</dbReference>
<dbReference type="PANTHER" id="PTHR20953:SF3">
    <property type="entry name" value="P-LOOP CONTAINING NUCLEOSIDE TRIPHOSPHATE HYDROLASES SUPERFAMILY PROTEIN"/>
    <property type="match status" value="1"/>
</dbReference>
<dbReference type="Pfam" id="PF19568">
    <property type="entry name" value="Spore_III_AA"/>
    <property type="match status" value="1"/>
</dbReference>
<dbReference type="SMART" id="SM00382">
    <property type="entry name" value="AAA"/>
    <property type="match status" value="1"/>
</dbReference>
<dbReference type="SUPFAM" id="SSF52540">
    <property type="entry name" value="P-loop containing nucleoside triphosphate hydrolases"/>
    <property type="match status" value="1"/>
</dbReference>
<keyword id="KW-0067">ATP-binding</keyword>
<keyword id="KW-0150">Chloroplast</keyword>
<keyword id="KW-0547">Nucleotide-binding</keyword>
<keyword id="KW-0934">Plastid</keyword>
<accession>O19920</accession>
<geneLocation type="chloroplast"/>
<comment type="subcellular location">
    <subcellularLocation>
        <location>Plastid</location>
        <location>Chloroplast</location>
    </subcellularLocation>
</comment>
<comment type="similarity">
    <text evidence="2">Belongs to the ycf45 family.</text>
</comment>
<reference key="1">
    <citation type="journal article" date="2000" name="J. Mol. Evol.">
        <title>The structure and gene repertoire of an ancient red algal plastid genome.</title>
        <authorList>
            <person name="Gloeckner G."/>
            <person name="Rosenthal A."/>
            <person name="Valentin K.-U."/>
        </authorList>
    </citation>
    <scope>NUCLEOTIDE SEQUENCE [LARGE SCALE GENOMIC DNA]</scope>
    <source>
        <strain>RK-1</strain>
    </source>
</reference>
<feature type="chain" id="PRO_0000217365" description="Uncharacterized protein ycf45">
    <location>
        <begin position="1"/>
        <end position="335"/>
    </location>
</feature>
<feature type="binding site" evidence="1">
    <location>
        <begin position="130"/>
        <end position="137"/>
    </location>
    <ligand>
        <name>ATP</name>
        <dbReference type="ChEBI" id="CHEBI:30616"/>
    </ligand>
</feature>
<name>YCF45_CYACA</name>
<organism>
    <name type="scientific">Cyanidium caldarium</name>
    <name type="common">Red alga</name>
    <dbReference type="NCBI Taxonomy" id="2771"/>
    <lineage>
        <taxon>Eukaryota</taxon>
        <taxon>Rhodophyta</taxon>
        <taxon>Bangiophyceae</taxon>
        <taxon>Cyanidiales</taxon>
        <taxon>Cyanidiaceae</taxon>
        <taxon>Cyanidium</taxon>
    </lineage>
</organism>
<evidence type="ECO:0000255" key="1"/>
<evidence type="ECO:0000305" key="2"/>
<sequence>MLIFNDLRHFLPVVPRFVYKSLKKHPRKFGLTEIVLDNGRRAEGRWREKTENLTHKKITKKHLLRCIKKIGIFNEDNRAGIYQTLHRISCIKNRYGNIVGLTYRIGREFIGIGPIIRDLIESNQSTLLIGRPGIGKTSFIREISRILSNEIMKRVIIVDSANEISGEGCCPHISTGKARRMEVQSINSQHEVMIEAIENHTPEIIIIDEIGTEYESQAAISISQRGIRLIGSAHSSDLFNLAKNPTLCKLVGGIESVTLSDTQAILRKTKKTILERKGCSCFNATIEINKKRTVKVYTSVEQSIDAILEGRVNNSQIRSMKLNGEITISLNYQDE</sequence>
<proteinExistence type="inferred from homology"/>
<gene>
    <name type="primary">ycf45</name>
    <name type="synonym">ycf17</name>
</gene>
<protein>
    <recommendedName>
        <fullName>Uncharacterized protein ycf45</fullName>
    </recommendedName>
</protein>